<organism>
    <name type="scientific">Drosophila melanogaster</name>
    <name type="common">Fruit fly</name>
    <dbReference type="NCBI Taxonomy" id="7227"/>
    <lineage>
        <taxon>Eukaryota</taxon>
        <taxon>Metazoa</taxon>
        <taxon>Ecdysozoa</taxon>
        <taxon>Arthropoda</taxon>
        <taxon>Hexapoda</taxon>
        <taxon>Insecta</taxon>
        <taxon>Pterygota</taxon>
        <taxon>Neoptera</taxon>
        <taxon>Endopterygota</taxon>
        <taxon>Diptera</taxon>
        <taxon>Brachycera</taxon>
        <taxon>Muscomorpha</taxon>
        <taxon>Ephydroidea</taxon>
        <taxon>Drosophilidae</taxon>
        <taxon>Drosophila</taxon>
        <taxon>Sophophora</taxon>
    </lineage>
</organism>
<accession>Q9W358</accession>
<sequence length="573" mass="65602">METEHLKRLEAKEADHIPAILDEFNTKNADLLVFDSFRTDNLWHELWLAIFGILDDQRLSHLHTQCLNTVRILTRDEFSLQTNYIEQEVNTLLKLARIEAGSLKLPATPDELKQEEREEPQLEPSQAQSEVIAEALKCLCNLVYQSSDCRRQCLRQHCLDAILKRVASSMRHPCALEYYDMKLLFLLTALEPAARSRLQIDLNGLTYMTKWLDDKLGEDSVGEEQLNIICELLKVMFNVTSAPDKSPNEYEIQSLHLTGVLRELLLRFGDLATEKDRAVVTHAINLLTNISGSCLTELTLRCSNAELESHKEREQDNEKEKDTEAGAGAKPRECCSQCFEKRNVRSLDVLLRYLRQSLAQQEAEASSHELLSPVLTVLVKCARSDRVMRHYLRQEILPPLRDVSQRPEVGQELRNHLCRFLTLPAMILRDLSAELLFVLCKENVGRMIKYTGYGNAAGLFAKRGILDCRRVEGTDYSSDSEDSDTEEYKQQQQGINPVLGCVEPRSKSHLDDISEEQKEYEAMQLVNLIEQLRQGGIVKPAMIDKDGRPQPLEHILQLQEELPQQQLDQKRKT</sequence>
<name>RIC8_DROME</name>
<gene>
    <name type="primary">ric8a</name>
    <name type="synonym">l(1)G0397</name>
    <name type="synonym">Ric8</name>
    <name type="ORF">CG15797</name>
</gene>
<evidence type="ECO:0000250" key="1">
    <source>
        <dbReference type="UniProtKB" id="Q9GSX9"/>
    </source>
</evidence>
<evidence type="ECO:0000256" key="2">
    <source>
        <dbReference type="SAM" id="MobiDB-lite"/>
    </source>
</evidence>
<evidence type="ECO:0000269" key="3">
    <source>
    </source>
</evidence>
<evidence type="ECO:0000269" key="4">
    <source>
    </source>
</evidence>
<evidence type="ECO:0000269" key="5">
    <source>
    </source>
</evidence>
<evidence type="ECO:0000269" key="6">
    <source>
    </source>
</evidence>
<evidence type="ECO:0000269" key="7">
    <source>
    </source>
</evidence>
<evidence type="ECO:0000305" key="8"/>
<reference key="1">
    <citation type="journal article" date="2000" name="Science">
        <title>The genome sequence of Drosophila melanogaster.</title>
        <authorList>
            <person name="Adams M.D."/>
            <person name="Celniker S.E."/>
            <person name="Holt R.A."/>
            <person name="Evans C.A."/>
            <person name="Gocayne J.D."/>
            <person name="Amanatides P.G."/>
            <person name="Scherer S.E."/>
            <person name="Li P.W."/>
            <person name="Hoskins R.A."/>
            <person name="Galle R.F."/>
            <person name="George R.A."/>
            <person name="Lewis S.E."/>
            <person name="Richards S."/>
            <person name="Ashburner M."/>
            <person name="Henderson S.N."/>
            <person name="Sutton G.G."/>
            <person name="Wortman J.R."/>
            <person name="Yandell M.D."/>
            <person name="Zhang Q."/>
            <person name="Chen L.X."/>
            <person name="Brandon R.C."/>
            <person name="Rogers Y.-H.C."/>
            <person name="Blazej R.G."/>
            <person name="Champe M."/>
            <person name="Pfeiffer B.D."/>
            <person name="Wan K.H."/>
            <person name="Doyle C."/>
            <person name="Baxter E.G."/>
            <person name="Helt G."/>
            <person name="Nelson C.R."/>
            <person name="Miklos G.L.G."/>
            <person name="Abril J.F."/>
            <person name="Agbayani A."/>
            <person name="An H.-J."/>
            <person name="Andrews-Pfannkoch C."/>
            <person name="Baldwin D."/>
            <person name="Ballew R.M."/>
            <person name="Basu A."/>
            <person name="Baxendale J."/>
            <person name="Bayraktaroglu L."/>
            <person name="Beasley E.M."/>
            <person name="Beeson K.Y."/>
            <person name="Benos P.V."/>
            <person name="Berman B.P."/>
            <person name="Bhandari D."/>
            <person name="Bolshakov S."/>
            <person name="Borkova D."/>
            <person name="Botchan M.R."/>
            <person name="Bouck J."/>
            <person name="Brokstein P."/>
            <person name="Brottier P."/>
            <person name="Burtis K.C."/>
            <person name="Busam D.A."/>
            <person name="Butler H."/>
            <person name="Cadieu E."/>
            <person name="Center A."/>
            <person name="Chandra I."/>
            <person name="Cherry J.M."/>
            <person name="Cawley S."/>
            <person name="Dahlke C."/>
            <person name="Davenport L.B."/>
            <person name="Davies P."/>
            <person name="de Pablos B."/>
            <person name="Delcher A."/>
            <person name="Deng Z."/>
            <person name="Mays A.D."/>
            <person name="Dew I."/>
            <person name="Dietz S.M."/>
            <person name="Dodson K."/>
            <person name="Doup L.E."/>
            <person name="Downes M."/>
            <person name="Dugan-Rocha S."/>
            <person name="Dunkov B.C."/>
            <person name="Dunn P."/>
            <person name="Durbin K.J."/>
            <person name="Evangelista C.C."/>
            <person name="Ferraz C."/>
            <person name="Ferriera S."/>
            <person name="Fleischmann W."/>
            <person name="Fosler C."/>
            <person name="Gabrielian A.E."/>
            <person name="Garg N.S."/>
            <person name="Gelbart W.M."/>
            <person name="Glasser K."/>
            <person name="Glodek A."/>
            <person name="Gong F."/>
            <person name="Gorrell J.H."/>
            <person name="Gu Z."/>
            <person name="Guan P."/>
            <person name="Harris M."/>
            <person name="Harris N.L."/>
            <person name="Harvey D.A."/>
            <person name="Heiman T.J."/>
            <person name="Hernandez J.R."/>
            <person name="Houck J."/>
            <person name="Hostin D."/>
            <person name="Houston K.A."/>
            <person name="Howland T.J."/>
            <person name="Wei M.-H."/>
            <person name="Ibegwam C."/>
            <person name="Jalali M."/>
            <person name="Kalush F."/>
            <person name="Karpen G.H."/>
            <person name="Ke Z."/>
            <person name="Kennison J.A."/>
            <person name="Ketchum K.A."/>
            <person name="Kimmel B.E."/>
            <person name="Kodira C.D."/>
            <person name="Kraft C.L."/>
            <person name="Kravitz S."/>
            <person name="Kulp D."/>
            <person name="Lai Z."/>
            <person name="Lasko P."/>
            <person name="Lei Y."/>
            <person name="Levitsky A.A."/>
            <person name="Li J.H."/>
            <person name="Li Z."/>
            <person name="Liang Y."/>
            <person name="Lin X."/>
            <person name="Liu X."/>
            <person name="Mattei B."/>
            <person name="McIntosh T.C."/>
            <person name="McLeod M.P."/>
            <person name="McPherson D."/>
            <person name="Merkulov G."/>
            <person name="Milshina N.V."/>
            <person name="Mobarry C."/>
            <person name="Morris J."/>
            <person name="Moshrefi A."/>
            <person name="Mount S.M."/>
            <person name="Moy M."/>
            <person name="Murphy B."/>
            <person name="Murphy L."/>
            <person name="Muzny D.M."/>
            <person name="Nelson D.L."/>
            <person name="Nelson D.R."/>
            <person name="Nelson K.A."/>
            <person name="Nixon K."/>
            <person name="Nusskern D.R."/>
            <person name="Pacleb J.M."/>
            <person name="Palazzolo M."/>
            <person name="Pittman G.S."/>
            <person name="Pan S."/>
            <person name="Pollard J."/>
            <person name="Puri V."/>
            <person name="Reese M.G."/>
            <person name="Reinert K."/>
            <person name="Remington K."/>
            <person name="Saunders R.D.C."/>
            <person name="Scheeler F."/>
            <person name="Shen H."/>
            <person name="Shue B.C."/>
            <person name="Siden-Kiamos I."/>
            <person name="Simpson M."/>
            <person name="Skupski M.P."/>
            <person name="Smith T.J."/>
            <person name="Spier E."/>
            <person name="Spradling A.C."/>
            <person name="Stapleton M."/>
            <person name="Strong R."/>
            <person name="Sun E."/>
            <person name="Svirskas R."/>
            <person name="Tector C."/>
            <person name="Turner R."/>
            <person name="Venter E."/>
            <person name="Wang A.H."/>
            <person name="Wang X."/>
            <person name="Wang Z.-Y."/>
            <person name="Wassarman D.A."/>
            <person name="Weinstock G.M."/>
            <person name="Weissenbach J."/>
            <person name="Williams S.M."/>
            <person name="Woodage T."/>
            <person name="Worley K.C."/>
            <person name="Wu D."/>
            <person name="Yang S."/>
            <person name="Yao Q.A."/>
            <person name="Ye J."/>
            <person name="Yeh R.-F."/>
            <person name="Zaveri J.S."/>
            <person name="Zhan M."/>
            <person name="Zhang G."/>
            <person name="Zhao Q."/>
            <person name="Zheng L."/>
            <person name="Zheng X.H."/>
            <person name="Zhong F.N."/>
            <person name="Zhong W."/>
            <person name="Zhou X."/>
            <person name="Zhu S.C."/>
            <person name="Zhu X."/>
            <person name="Smith H.O."/>
            <person name="Gibbs R.A."/>
            <person name="Myers E.W."/>
            <person name="Rubin G.M."/>
            <person name="Venter J.C."/>
        </authorList>
    </citation>
    <scope>NUCLEOTIDE SEQUENCE [LARGE SCALE GENOMIC DNA]</scope>
    <source>
        <strain>Berkeley</strain>
    </source>
</reference>
<reference key="2">
    <citation type="journal article" date="2002" name="Genome Biol.">
        <title>Annotation of the Drosophila melanogaster euchromatic genome: a systematic review.</title>
        <authorList>
            <person name="Misra S."/>
            <person name="Crosby M.A."/>
            <person name="Mungall C.J."/>
            <person name="Matthews B.B."/>
            <person name="Campbell K.S."/>
            <person name="Hradecky P."/>
            <person name="Huang Y."/>
            <person name="Kaminker J.S."/>
            <person name="Millburn G.H."/>
            <person name="Prochnik S.E."/>
            <person name="Smith C.D."/>
            <person name="Tupy J.L."/>
            <person name="Whitfield E.J."/>
            <person name="Bayraktaroglu L."/>
            <person name="Berman B.P."/>
            <person name="Bettencourt B.R."/>
            <person name="Celniker S.E."/>
            <person name="de Grey A.D.N.J."/>
            <person name="Drysdale R.A."/>
            <person name="Harris N.L."/>
            <person name="Richter J."/>
            <person name="Russo S."/>
            <person name="Schroeder A.J."/>
            <person name="Shu S.Q."/>
            <person name="Stapleton M."/>
            <person name="Yamada C."/>
            <person name="Ashburner M."/>
            <person name="Gelbart W.M."/>
            <person name="Rubin G.M."/>
            <person name="Lewis S.E."/>
        </authorList>
    </citation>
    <scope>GENOME REANNOTATION</scope>
    <source>
        <strain>Berkeley</strain>
    </source>
</reference>
<reference key="3">
    <citation type="submission" date="2003-02" db="EMBL/GenBank/DDBJ databases">
        <authorList>
            <person name="Stapleton M."/>
            <person name="Brokstein P."/>
            <person name="Hong L."/>
            <person name="Agbayani A."/>
            <person name="Carlson J.W."/>
            <person name="Champe M."/>
            <person name="Chavez C."/>
            <person name="Dorsett V."/>
            <person name="Dresnek D."/>
            <person name="Farfan D."/>
            <person name="Frise E."/>
            <person name="George R.A."/>
            <person name="Gonzalez M."/>
            <person name="Guarin H."/>
            <person name="Kronmiller B."/>
            <person name="Li P.W."/>
            <person name="Liao G."/>
            <person name="Miranda A."/>
            <person name="Mungall C.J."/>
            <person name="Nunoo J."/>
            <person name="Pacleb J.M."/>
            <person name="Paragas V."/>
            <person name="Park S."/>
            <person name="Patel S."/>
            <person name="Phouanenavong S."/>
            <person name="Wan K.H."/>
            <person name="Yu C."/>
            <person name="Lewis S.E."/>
            <person name="Rubin G.M."/>
            <person name="Celniker S.E."/>
        </authorList>
    </citation>
    <scope>NUCLEOTIDE SEQUENCE [LARGE SCALE MRNA]</scope>
    <source>
        <strain>Berkeley</strain>
        <tissue>Embryo</tissue>
    </source>
</reference>
<reference key="4">
    <citation type="journal article" date="2005" name="Nat. Cell Biol.">
        <title>Drosophila Ric-8 regulates Galphai cortical localization to promote Galphai-dependent planar orientation of the mitotic spindle during asymmetric cell division.</title>
        <authorList>
            <person name="David N.B."/>
            <person name="Martin C.A."/>
            <person name="Segalen M."/>
            <person name="Rosenfeld F."/>
            <person name="Schweisguth F."/>
            <person name="Bellaiche Y."/>
        </authorList>
    </citation>
    <scope>FUNCTION</scope>
    <scope>SUBCELLULAR LOCATION</scope>
</reference>
<reference key="5">
    <citation type="journal article" date="2005" name="Nat. Cell Biol.">
        <title>Ric-8 controls Drosophila neural progenitor asymmetric division by regulating heterotrimeric G proteins.</title>
        <authorList>
            <person name="Wang H."/>
            <person name="Ng K.H."/>
            <person name="Qian H."/>
            <person name="Siderovski D.P."/>
            <person name="Chia W."/>
            <person name="Yu F."/>
        </authorList>
    </citation>
    <scope>FUNCTION</scope>
    <scope>TISSUE SPECIFICITY</scope>
    <scope>DEVELOPMENTAL STAGE</scope>
    <scope>INTERACTION WITH G-I-ALPHA-65A</scope>
</reference>
<reference key="6">
    <citation type="journal article" date="2005" name="Nat. Cell Biol.">
        <title>Drosophila Ric-8 is essential for plasma-membrane localization of heterotrimeric G proteins.</title>
        <authorList>
            <person name="Hampoelz B."/>
            <person name="Hoeller O."/>
            <person name="Bowman S.K."/>
            <person name="Dunican D."/>
            <person name="Knoblich J.A."/>
        </authorList>
    </citation>
    <scope>FUNCTION</scope>
    <scope>SUBCELLULAR LOCATION</scope>
    <scope>INTERACTION WITH G-I-ALPHA-65A</scope>
</reference>
<reference key="7">
    <citation type="journal article" date="2008" name="J. Proteome Res.">
        <title>Phosphoproteome analysis of Drosophila melanogaster embryos.</title>
        <authorList>
            <person name="Zhai B."/>
            <person name="Villen J."/>
            <person name="Beausoleil S.A."/>
            <person name="Mintseris J."/>
            <person name="Gygi S.P."/>
        </authorList>
    </citation>
    <scope>PHOSPHORYLATION [LARGE SCALE ANALYSIS] AT SER-477; SER-478; SER-480 AND SER-483</scope>
    <scope>IDENTIFICATION BY MASS SPECTROMETRY</scope>
    <source>
        <tissue>Embryo</tissue>
    </source>
</reference>
<reference key="8">
    <citation type="journal article" date="2014" name="J. Cell Sci.">
        <title>The guanine-exchange factor Ric8a binds to the Ca sensor NCS-1 to regulate synapse number and neurotransmitter release.</title>
        <authorList>
            <person name="Romero-Pozuelo J."/>
            <person name="Dason J.S."/>
            <person name="Mansilla A."/>
            <person name="Banos-Mateos S."/>
            <person name="Sardina J.L."/>
            <person name="Chaves-Sanjuan A."/>
            <person name="Jurado-Gomez J."/>
            <person name="Santana E."/>
            <person name="Atwood H.L."/>
            <person name="Hernandez-Hernandez A."/>
            <person name="Sanchez-Barrena M.J."/>
            <person name="Ferrus A."/>
        </authorList>
    </citation>
    <scope>FUNCTION</scope>
    <scope>INTERACTION WITH FRQ2</scope>
    <scope>SUBCELLULAR LOCATION</scope>
    <scope>TISSUE SPECIFICITY</scope>
    <scope>DISRUPTION PHENOTYPE</scope>
</reference>
<keyword id="KW-0966">Cell projection</keyword>
<keyword id="KW-0143">Chaperone</keyword>
<keyword id="KW-0963">Cytoplasm</keyword>
<keyword id="KW-0217">Developmental protein</keyword>
<keyword id="KW-0306">Gastrulation</keyword>
<keyword id="KW-0344">Guanine-nucleotide releasing factor</keyword>
<keyword id="KW-0597">Phosphoprotein</keyword>
<keyword id="KW-1185">Reference proteome</keyword>
<keyword id="KW-0770">Synapse</keyword>
<comment type="function">
    <text evidence="1 3 4 5 7">Chaperone that specifically binds and folds some, but not all, nascent G alpha proteins prior to G protein heterotrimer formation, promoting their stability and activity (PubMed:16228010, PubMed:16228011). Also acts as a guanine nucleotide exchange factor (GEF) for G alpha proteins by stimulating exchange of bound GDP for free GTP (By similarity). Plays a key role in asymmetric spindle positioning, a step for asymmetric cell division that generates cell diversity during development by activating G(i) alpha protein independently of G-protein coupled receptors (PubMed:16228012). Required during gastrulation and sensory organ precursor (SOP) formation (PubMed:16228011). Plays a role in positively regulating synapse number and neurotransmitter release (PubMed:25074811).</text>
</comment>
<comment type="subunit">
    <text evidence="4 5 7">Interacts with GDP-bound G(i)-alpha protein G-i-alpha-65A. Does not interact with G-alpha proteins when they are in complex with subunits beta and gamma (PubMed:16228011, PubMed:16228012). Interacts with Frq2 in a Ca(2+)-independent manner but does not interact with Frq1 (PubMed:25074811).</text>
</comment>
<comment type="subcellular location">
    <subcellularLocation>
        <location evidence="3 4">Cytoplasm</location>
        <location evidence="3 4">Cell cortex</location>
    </subcellularLocation>
    <subcellularLocation>
        <location evidence="7">Presynapse</location>
    </subcellularLocation>
    <subcellularLocation>
        <location evidence="7">Cytoplasm</location>
    </subcellularLocation>
    <text evidence="7">Detected in both type Is boutons and Ib boutons in close proximity to synaptic active zones.</text>
</comment>
<comment type="tissue specificity">
    <text evidence="7">Expression in the embryo is primarily neural.</text>
</comment>
<comment type="developmental stage">
    <text evidence="5">Expressed both maternally and zygotically.</text>
</comment>
<comment type="disruption phenotype">
    <text evidence="7">RNAi-mediated knockdown results in a reduction in synapse number and reduced neurotransmitter release.</text>
</comment>
<comment type="similarity">
    <text evidence="8">Belongs to the synembryn family.</text>
</comment>
<feature type="chain" id="PRO_0000235905" description="Chaperone Ric-8">
    <location>
        <begin position="1"/>
        <end position="573"/>
    </location>
</feature>
<feature type="region of interest" description="Disordered" evidence="2">
    <location>
        <begin position="308"/>
        <end position="329"/>
    </location>
</feature>
<feature type="region of interest" description="Disordered" evidence="2">
    <location>
        <begin position="473"/>
        <end position="493"/>
    </location>
</feature>
<feature type="compositionally biased region" description="Basic and acidic residues" evidence="2">
    <location>
        <begin position="308"/>
        <end position="324"/>
    </location>
</feature>
<feature type="modified residue" description="Phosphoserine" evidence="6">
    <location>
        <position position="477"/>
    </location>
</feature>
<feature type="modified residue" description="Phosphoserine" evidence="6">
    <location>
        <position position="478"/>
    </location>
</feature>
<feature type="modified residue" description="Phosphoserine" evidence="6">
    <location>
        <position position="480"/>
    </location>
</feature>
<feature type="modified residue" description="Phosphoserine" evidence="6">
    <location>
        <position position="483"/>
    </location>
</feature>
<protein>
    <recommendedName>
        <fullName>Chaperone Ric-8</fullName>
    </recommendedName>
    <alternativeName>
        <fullName>Synembryn</fullName>
    </alternativeName>
</protein>
<dbReference type="EMBL" id="AE014298">
    <property type="protein sequence ID" value="AAF46477.2"/>
    <property type="molecule type" value="Genomic_DNA"/>
</dbReference>
<dbReference type="EMBL" id="BT004873">
    <property type="protein sequence ID" value="AAO45229.1"/>
    <property type="molecule type" value="mRNA"/>
</dbReference>
<dbReference type="RefSeq" id="NP_001285048.1">
    <property type="nucleotide sequence ID" value="NM_001298119.1"/>
</dbReference>
<dbReference type="RefSeq" id="NP_572550.2">
    <property type="nucleotide sequence ID" value="NM_132322.4"/>
</dbReference>
<dbReference type="SMR" id="Q9W358"/>
<dbReference type="BioGRID" id="58324">
    <property type="interactions" value="7"/>
</dbReference>
<dbReference type="FunCoup" id="Q9W358">
    <property type="interactions" value="1838"/>
</dbReference>
<dbReference type="IntAct" id="Q9W358">
    <property type="interactions" value="1"/>
</dbReference>
<dbReference type="STRING" id="7227.FBpp0311994"/>
<dbReference type="iPTMnet" id="Q9W358"/>
<dbReference type="PaxDb" id="7227-FBpp0071252"/>
<dbReference type="EnsemblMetazoa" id="FBtr0071317">
    <property type="protein sequence ID" value="FBpp0071252"/>
    <property type="gene ID" value="FBgn0028292"/>
</dbReference>
<dbReference type="EnsemblMetazoa" id="FBtr0346166">
    <property type="protein sequence ID" value="FBpp0311994"/>
    <property type="gene ID" value="FBgn0028292"/>
</dbReference>
<dbReference type="GeneID" id="31874"/>
<dbReference type="KEGG" id="dme:Dmel_CG15797"/>
<dbReference type="UCSC" id="CG15797-RA">
    <property type="organism name" value="d. melanogaster"/>
</dbReference>
<dbReference type="AGR" id="FB:FBgn0028292"/>
<dbReference type="CTD" id="60626"/>
<dbReference type="FlyBase" id="FBgn0028292">
    <property type="gene designation" value="ric8a"/>
</dbReference>
<dbReference type="VEuPathDB" id="VectorBase:FBgn0028292"/>
<dbReference type="eggNOG" id="KOG4464">
    <property type="taxonomic scope" value="Eukaryota"/>
</dbReference>
<dbReference type="HOGENOM" id="CLU_018602_1_0_1"/>
<dbReference type="InParanoid" id="Q9W358"/>
<dbReference type="OMA" id="NADPIFT"/>
<dbReference type="OrthoDB" id="5585685at2759"/>
<dbReference type="PhylomeDB" id="Q9W358"/>
<dbReference type="SignaLink" id="Q9W358"/>
<dbReference type="BioGRID-ORCS" id="31874">
    <property type="hits" value="1 hit in 3 CRISPR screens"/>
</dbReference>
<dbReference type="GenomeRNAi" id="31874"/>
<dbReference type="PRO" id="PR:Q9W358"/>
<dbReference type="Proteomes" id="UP000000803">
    <property type="component" value="Chromosome X"/>
</dbReference>
<dbReference type="Bgee" id="FBgn0028292">
    <property type="expression patterns" value="Expressed in outer photoreceptor cell (Drosophila) in insect head and 129 other cell types or tissues"/>
</dbReference>
<dbReference type="ExpressionAtlas" id="Q9W358">
    <property type="expression patterns" value="baseline and differential"/>
</dbReference>
<dbReference type="GO" id="GO:0005938">
    <property type="term" value="C:cell cortex"/>
    <property type="evidence" value="ECO:0007669"/>
    <property type="project" value="UniProtKB-SubCell"/>
</dbReference>
<dbReference type="GO" id="GO:0005737">
    <property type="term" value="C:cytoplasm"/>
    <property type="evidence" value="ECO:0000314"/>
    <property type="project" value="UniProtKB"/>
</dbReference>
<dbReference type="GO" id="GO:0005829">
    <property type="term" value="C:cytosol"/>
    <property type="evidence" value="ECO:0000314"/>
    <property type="project" value="UniProtKB"/>
</dbReference>
<dbReference type="GO" id="GO:0061176">
    <property type="term" value="C:type Ib terminal bouton"/>
    <property type="evidence" value="ECO:0000314"/>
    <property type="project" value="UniProtKB"/>
</dbReference>
<dbReference type="GO" id="GO:0061177">
    <property type="term" value="C:type Is terminal bouton"/>
    <property type="evidence" value="ECO:0000314"/>
    <property type="project" value="UniProtKB"/>
</dbReference>
<dbReference type="GO" id="GO:0001965">
    <property type="term" value="F:G-protein alpha-subunit binding"/>
    <property type="evidence" value="ECO:0000353"/>
    <property type="project" value="UniProtKB"/>
</dbReference>
<dbReference type="GO" id="GO:0005085">
    <property type="term" value="F:guanyl-nucleotide exchange factor activity"/>
    <property type="evidence" value="ECO:0000250"/>
    <property type="project" value="UniProtKB"/>
</dbReference>
<dbReference type="GO" id="GO:0008356">
    <property type="term" value="P:asymmetric cell division"/>
    <property type="evidence" value="ECO:0000315"/>
    <property type="project" value="UniProtKB"/>
</dbReference>
<dbReference type="GO" id="GO:0040001">
    <property type="term" value="P:establishment of mitotic spindle localization"/>
    <property type="evidence" value="ECO:0000315"/>
    <property type="project" value="UniProtKB"/>
</dbReference>
<dbReference type="GO" id="GO:0007163">
    <property type="term" value="P:establishment or maintenance of cell polarity"/>
    <property type="evidence" value="ECO:0000315"/>
    <property type="project" value="UniProtKB"/>
</dbReference>
<dbReference type="GO" id="GO:0007186">
    <property type="term" value="P:G protein-coupled receptor signaling pathway"/>
    <property type="evidence" value="ECO:0000318"/>
    <property type="project" value="GO_Central"/>
</dbReference>
<dbReference type="GO" id="GO:0010004">
    <property type="term" value="P:gastrulation involving germ band extension"/>
    <property type="evidence" value="ECO:0000315"/>
    <property type="project" value="UniProtKB"/>
</dbReference>
<dbReference type="GO" id="GO:0055057">
    <property type="term" value="P:neuroblast division"/>
    <property type="evidence" value="ECO:0000315"/>
    <property type="project" value="UniProtKB"/>
</dbReference>
<dbReference type="GO" id="GO:0007269">
    <property type="term" value="P:neurotransmitter secretion"/>
    <property type="evidence" value="ECO:0000315"/>
    <property type="project" value="UniProtKB"/>
</dbReference>
<dbReference type="GO" id="GO:0008104">
    <property type="term" value="P:protein localization"/>
    <property type="evidence" value="ECO:0000315"/>
    <property type="project" value="UniProtKB"/>
</dbReference>
<dbReference type="GO" id="GO:0050821">
    <property type="term" value="P:protein stabilization"/>
    <property type="evidence" value="ECO:0000315"/>
    <property type="project" value="UniProtKB"/>
</dbReference>
<dbReference type="FunFam" id="1.25.10.10:FF:000756">
    <property type="entry name" value="Synembryn"/>
    <property type="match status" value="1"/>
</dbReference>
<dbReference type="Gene3D" id="1.25.10.10">
    <property type="entry name" value="Leucine-rich Repeat Variant"/>
    <property type="match status" value="1"/>
</dbReference>
<dbReference type="InterPro" id="IPR011989">
    <property type="entry name" value="ARM-like"/>
</dbReference>
<dbReference type="InterPro" id="IPR016024">
    <property type="entry name" value="ARM-type_fold"/>
</dbReference>
<dbReference type="InterPro" id="IPR008376">
    <property type="entry name" value="Chaperone_Ric-8_A/B"/>
</dbReference>
<dbReference type="InterPro" id="IPR019318">
    <property type="entry name" value="Gua_nucleotide_exch_fac_Ric8"/>
</dbReference>
<dbReference type="PANTHER" id="PTHR12425">
    <property type="entry name" value="SYNEMBRYN"/>
    <property type="match status" value="1"/>
</dbReference>
<dbReference type="PANTHER" id="PTHR12425:SF5">
    <property type="entry name" value="SYNEMBRYN"/>
    <property type="match status" value="1"/>
</dbReference>
<dbReference type="Pfam" id="PF10165">
    <property type="entry name" value="Ric8"/>
    <property type="match status" value="1"/>
</dbReference>
<dbReference type="PRINTS" id="PR01802">
    <property type="entry name" value="SYNEMBRYN"/>
</dbReference>
<dbReference type="SUPFAM" id="SSF48371">
    <property type="entry name" value="ARM repeat"/>
    <property type="match status" value="1"/>
</dbReference>
<proteinExistence type="evidence at protein level"/>